<comment type="function">
    <text evidence="1">Required for the assembly of axonemal inner and outer dynein arms. Involved in preassembly of dyneins into complexes before their transport into cilia (By similarity).</text>
</comment>
<comment type="subcellular location">
    <subcellularLocation>
        <location evidence="1">Cytoplasm</location>
    </subcellularLocation>
    <subcellularLocation>
        <location evidence="2">Dynein axonemal particle</location>
    </subcellularLocation>
</comment>
<comment type="similarity">
    <text evidence="3">Belongs to the DNAAF3 family.</text>
</comment>
<gene>
    <name type="primary">dnaaf3</name>
</gene>
<reference key="1">
    <citation type="journal article" date="2010" name="Science">
        <title>The genome of the Western clawed frog Xenopus tropicalis.</title>
        <authorList>
            <person name="Hellsten U."/>
            <person name="Harland R.M."/>
            <person name="Gilchrist M.J."/>
            <person name="Hendrix D."/>
            <person name="Jurka J."/>
            <person name="Kapitonov V."/>
            <person name="Ovcharenko I."/>
            <person name="Putnam N.H."/>
            <person name="Shu S."/>
            <person name="Taher L."/>
            <person name="Blitz I.L."/>
            <person name="Blumberg B."/>
            <person name="Dichmann D.S."/>
            <person name="Dubchak I."/>
            <person name="Amaya E."/>
            <person name="Detter J.C."/>
            <person name="Fletcher R."/>
            <person name="Gerhard D.S."/>
            <person name="Goodstein D."/>
            <person name="Graves T."/>
            <person name="Grigoriev I.V."/>
            <person name="Grimwood J."/>
            <person name="Kawashima T."/>
            <person name="Lindquist E."/>
            <person name="Lucas S.M."/>
            <person name="Mead P.E."/>
            <person name="Mitros T."/>
            <person name="Ogino H."/>
            <person name="Ohta Y."/>
            <person name="Poliakov A.V."/>
            <person name="Pollet N."/>
            <person name="Robert J."/>
            <person name="Salamov A."/>
            <person name="Sater A.K."/>
            <person name="Schmutz J."/>
            <person name="Terry A."/>
            <person name="Vize P.D."/>
            <person name="Warren W.C."/>
            <person name="Wells D."/>
            <person name="Wills A."/>
            <person name="Wilson R.K."/>
            <person name="Zimmerman L.B."/>
            <person name="Zorn A.M."/>
            <person name="Grainger R."/>
            <person name="Grammer T."/>
            <person name="Khokha M.K."/>
            <person name="Richardson P.M."/>
            <person name="Rokhsar D.S."/>
        </authorList>
    </citation>
    <scope>NUCLEOTIDE SEQUENCE [LARGE SCALE GENOMIC DNA]</scope>
</reference>
<protein>
    <recommendedName>
        <fullName>Dynein axonemal assembly factor 3</fullName>
    </recommendedName>
</protein>
<keyword id="KW-0970">Cilium biogenesis/degradation</keyword>
<keyword id="KW-0963">Cytoplasm</keyword>
<keyword id="KW-1185">Reference proteome</keyword>
<evidence type="ECO:0000250" key="1"/>
<evidence type="ECO:0000250" key="2">
    <source>
        <dbReference type="UniProtKB" id="Q32NQ7"/>
    </source>
</evidence>
<evidence type="ECO:0000305" key="3"/>
<accession>F6S9E6</accession>
<name>DAAF3_XENTR</name>
<feature type="chain" id="PRO_0000416896" description="Dynein axonemal assembly factor 3">
    <location>
        <begin position="1"/>
        <end position="449"/>
    </location>
</feature>
<sequence length="449" mass="51684">MAAVVRRMGPVWWGLTPALDLQMHLHPPPPPEIYCSCSDDLPELNILLVGGGDGRHILKTICQASRWPHRKLKFFIIESDLELLARHMLFLSLALEHPEQMGLQEKSELFLELFGNSLIRNKTASYLQEKSELFIRYVTDPDYQQSNVPLLNLSSIKFKERDKLEDIFKFWRNADPKLFPIDKYWDEKNRQNLGRRYDSRKGAYDWDLSMKLHDRGAGVINSREYNYWREKGVAFMNREGVYDIPNKTLASQMVVPQSSGKVLARGYWGDITASPYIAFGIETEEESLLQTANGVHVKSAQDIAQHNMISLFHELAYGKIYSVPASGQAESELAKTDSDYKTNEEQTVGLITLNNVEIHFLPRFNNFFNLLYFSCSMVHFLKPEYKFIAASKATLVLELTKFMVDLQTEKLQDYVTIVAKLAQEAGFTPTETIDWKTDYIAKFERAHDS</sequence>
<organism>
    <name type="scientific">Xenopus tropicalis</name>
    <name type="common">Western clawed frog</name>
    <name type="synonym">Silurana tropicalis</name>
    <dbReference type="NCBI Taxonomy" id="8364"/>
    <lineage>
        <taxon>Eukaryota</taxon>
        <taxon>Metazoa</taxon>
        <taxon>Chordata</taxon>
        <taxon>Craniata</taxon>
        <taxon>Vertebrata</taxon>
        <taxon>Euteleostomi</taxon>
        <taxon>Amphibia</taxon>
        <taxon>Batrachia</taxon>
        <taxon>Anura</taxon>
        <taxon>Pipoidea</taxon>
        <taxon>Pipidae</taxon>
        <taxon>Xenopodinae</taxon>
        <taxon>Xenopus</taxon>
        <taxon>Silurana</taxon>
    </lineage>
</organism>
<dbReference type="EMBL" id="AAMC01079094">
    <property type="status" value="NOT_ANNOTATED_CDS"/>
    <property type="molecule type" value="Genomic_DNA"/>
</dbReference>
<dbReference type="FunCoup" id="F6S9E6">
    <property type="interactions" value="16"/>
</dbReference>
<dbReference type="STRING" id="8364.ENSXETP00000011743"/>
<dbReference type="PaxDb" id="8364-ENSXETP00000006972"/>
<dbReference type="eggNOG" id="ENOG502QT97">
    <property type="taxonomic scope" value="Eukaryota"/>
</dbReference>
<dbReference type="HOGENOM" id="CLU_024420_2_1_1"/>
<dbReference type="InParanoid" id="F6S9E6"/>
<dbReference type="Proteomes" id="UP000008143">
    <property type="component" value="Unplaced"/>
</dbReference>
<dbReference type="GO" id="GO:0120293">
    <property type="term" value="C:dynein axonemal particle"/>
    <property type="evidence" value="ECO:0000250"/>
    <property type="project" value="UniProtKB"/>
</dbReference>
<dbReference type="GO" id="GO:0070286">
    <property type="term" value="P:axonemal dynein complex assembly"/>
    <property type="evidence" value="ECO:0000250"/>
    <property type="project" value="UniProtKB"/>
</dbReference>
<dbReference type="GO" id="GO:0044458">
    <property type="term" value="P:motile cilium assembly"/>
    <property type="evidence" value="ECO:0000250"/>
    <property type="project" value="UniProtKB"/>
</dbReference>
<dbReference type="InterPro" id="IPR039304">
    <property type="entry name" value="DNAAF3"/>
</dbReference>
<dbReference type="InterPro" id="IPR028235">
    <property type="entry name" value="DNAAF3_C"/>
</dbReference>
<dbReference type="InterPro" id="IPR027974">
    <property type="entry name" value="DUF4470"/>
</dbReference>
<dbReference type="PANTHER" id="PTHR22118">
    <property type="entry name" value="DYNEIN ASSEMBLY FACTOR 3, AXONEMAL"/>
    <property type="match status" value="1"/>
</dbReference>
<dbReference type="PANTHER" id="PTHR22118:SF14">
    <property type="entry name" value="DYNEIN AXONEMAL ASSEMBLY FACTOR 3"/>
    <property type="match status" value="1"/>
</dbReference>
<dbReference type="Pfam" id="PF14737">
    <property type="entry name" value="DUF4470"/>
    <property type="match status" value="1"/>
</dbReference>
<dbReference type="Pfam" id="PF14740">
    <property type="entry name" value="DUF4471"/>
    <property type="match status" value="1"/>
</dbReference>
<proteinExistence type="inferred from homology"/>